<keyword id="KW-1185">Reference proteome</keyword>
<keyword id="KW-0949">S-adenosyl-L-methionine</keyword>
<keyword id="KW-0808">Transferase</keyword>
<organism>
    <name type="scientific">Citrobacter koseri (strain ATCC BAA-895 / CDC 4225-83 / SGSC4696)</name>
    <dbReference type="NCBI Taxonomy" id="290338"/>
    <lineage>
        <taxon>Bacteria</taxon>
        <taxon>Pseudomonadati</taxon>
        <taxon>Pseudomonadota</taxon>
        <taxon>Gammaproteobacteria</taxon>
        <taxon>Enterobacterales</taxon>
        <taxon>Enterobacteriaceae</taxon>
        <taxon>Citrobacter</taxon>
    </lineage>
</organism>
<feature type="chain" id="PRO_0000314320" description="Carboxy-S-adenosyl-L-methionine synthase">
    <location>
        <begin position="1"/>
        <end position="247"/>
    </location>
</feature>
<feature type="binding site" evidence="1">
    <location>
        <position position="39"/>
    </location>
    <ligand>
        <name>S-adenosyl-L-methionine</name>
        <dbReference type="ChEBI" id="CHEBI:59789"/>
    </ligand>
</feature>
<feature type="binding site" evidence="1">
    <location>
        <begin position="64"/>
        <end position="66"/>
    </location>
    <ligand>
        <name>S-adenosyl-L-methionine</name>
        <dbReference type="ChEBI" id="CHEBI:59789"/>
    </ligand>
</feature>
<feature type="binding site" evidence="1">
    <location>
        <begin position="89"/>
        <end position="90"/>
    </location>
    <ligand>
        <name>S-adenosyl-L-methionine</name>
        <dbReference type="ChEBI" id="CHEBI:59789"/>
    </ligand>
</feature>
<feature type="binding site" evidence="1">
    <location>
        <begin position="117"/>
        <end position="118"/>
    </location>
    <ligand>
        <name>S-adenosyl-L-methionine</name>
        <dbReference type="ChEBI" id="CHEBI:59789"/>
    </ligand>
</feature>
<feature type="binding site" evidence="1">
    <location>
        <position position="132"/>
    </location>
    <ligand>
        <name>S-adenosyl-L-methionine</name>
        <dbReference type="ChEBI" id="CHEBI:59789"/>
    </ligand>
</feature>
<feature type="binding site" evidence="1">
    <location>
        <position position="199"/>
    </location>
    <ligand>
        <name>S-adenosyl-L-methionine</name>
        <dbReference type="ChEBI" id="CHEBI:59789"/>
    </ligand>
</feature>
<reference key="1">
    <citation type="submission" date="2007-08" db="EMBL/GenBank/DDBJ databases">
        <authorList>
            <consortium name="The Citrobacter koseri Genome Sequencing Project"/>
            <person name="McClelland M."/>
            <person name="Sanderson E.K."/>
            <person name="Porwollik S."/>
            <person name="Spieth J."/>
            <person name="Clifton W.S."/>
            <person name="Latreille P."/>
            <person name="Courtney L."/>
            <person name="Wang C."/>
            <person name="Pepin K."/>
            <person name="Bhonagiri V."/>
            <person name="Nash W."/>
            <person name="Johnson M."/>
            <person name="Thiruvilangam P."/>
            <person name="Wilson R."/>
        </authorList>
    </citation>
    <scope>NUCLEOTIDE SEQUENCE [LARGE SCALE GENOMIC DNA]</scope>
    <source>
        <strain>ATCC BAA-895 / CDC 4225-83 / SGSC4696</strain>
    </source>
</reference>
<accession>A8AFH1</accession>
<name>CMOA_CITK8</name>
<gene>
    <name evidence="1" type="primary">cmoA</name>
    <name type="ordered locus">CKO_01091</name>
</gene>
<evidence type="ECO:0000255" key="1">
    <source>
        <dbReference type="HAMAP-Rule" id="MF_01589"/>
    </source>
</evidence>
<dbReference type="EC" id="2.1.3.-" evidence="1"/>
<dbReference type="EMBL" id="CP000822">
    <property type="protein sequence ID" value="ABV12234.1"/>
    <property type="molecule type" value="Genomic_DNA"/>
</dbReference>
<dbReference type="RefSeq" id="WP_012131988.1">
    <property type="nucleotide sequence ID" value="NC_009792.1"/>
</dbReference>
<dbReference type="SMR" id="A8AFH1"/>
<dbReference type="STRING" id="290338.CKO_01091"/>
<dbReference type="GeneID" id="45135240"/>
<dbReference type="KEGG" id="cko:CKO_01091"/>
<dbReference type="HOGENOM" id="CLU_078475_0_0_6"/>
<dbReference type="OrthoDB" id="9779941at2"/>
<dbReference type="Proteomes" id="UP000008148">
    <property type="component" value="Chromosome"/>
</dbReference>
<dbReference type="GO" id="GO:0016743">
    <property type="term" value="F:carboxyl- or carbamoyltransferase activity"/>
    <property type="evidence" value="ECO:0007669"/>
    <property type="project" value="UniProtKB-UniRule"/>
</dbReference>
<dbReference type="GO" id="GO:1904047">
    <property type="term" value="F:S-adenosyl-L-methionine binding"/>
    <property type="evidence" value="ECO:0007669"/>
    <property type="project" value="UniProtKB-UniRule"/>
</dbReference>
<dbReference type="GO" id="GO:0002098">
    <property type="term" value="P:tRNA wobble uridine modification"/>
    <property type="evidence" value="ECO:0007669"/>
    <property type="project" value="InterPro"/>
</dbReference>
<dbReference type="CDD" id="cd02440">
    <property type="entry name" value="AdoMet_MTases"/>
    <property type="match status" value="1"/>
</dbReference>
<dbReference type="FunFam" id="3.40.50.150:FF:000030">
    <property type="entry name" value="Carboxy-S-adenosyl-L-methionine synthase"/>
    <property type="match status" value="1"/>
</dbReference>
<dbReference type="Gene3D" id="3.40.50.150">
    <property type="entry name" value="Vaccinia Virus protein VP39"/>
    <property type="match status" value="1"/>
</dbReference>
<dbReference type="HAMAP" id="MF_01589">
    <property type="entry name" value="Cx_SAM_synthase"/>
    <property type="match status" value="1"/>
</dbReference>
<dbReference type="InterPro" id="IPR005271">
    <property type="entry name" value="CmoA"/>
</dbReference>
<dbReference type="InterPro" id="IPR041698">
    <property type="entry name" value="Methyltransf_25"/>
</dbReference>
<dbReference type="InterPro" id="IPR029063">
    <property type="entry name" value="SAM-dependent_MTases_sf"/>
</dbReference>
<dbReference type="NCBIfam" id="TIGR00740">
    <property type="entry name" value="carboxy-S-adenosyl-L-methionine synthase CmoA"/>
    <property type="match status" value="1"/>
</dbReference>
<dbReference type="NCBIfam" id="NF011995">
    <property type="entry name" value="PRK15451.1"/>
    <property type="match status" value="1"/>
</dbReference>
<dbReference type="PANTHER" id="PTHR43861:SF2">
    <property type="entry name" value="CARBOXY-S-ADENOSYL-L-METHIONINE SYNTHASE"/>
    <property type="match status" value="1"/>
</dbReference>
<dbReference type="PANTHER" id="PTHR43861">
    <property type="entry name" value="TRANS-ACONITATE 2-METHYLTRANSFERASE-RELATED"/>
    <property type="match status" value="1"/>
</dbReference>
<dbReference type="Pfam" id="PF13649">
    <property type="entry name" value="Methyltransf_25"/>
    <property type="match status" value="1"/>
</dbReference>
<dbReference type="PIRSF" id="PIRSF006325">
    <property type="entry name" value="MeTrfase_bac"/>
    <property type="match status" value="1"/>
</dbReference>
<dbReference type="SUPFAM" id="SSF53335">
    <property type="entry name" value="S-adenosyl-L-methionine-dependent methyltransferases"/>
    <property type="match status" value="1"/>
</dbReference>
<sequence length="247" mass="27733">MSHRDTLFSAPIASLGDWTFDERVAEVFPDMIQRSVPGYSNIISMIGMLAERFVQPNTQVYDLGCSLGAATLSVRRNIHHANCKIIAVDNSPAMIERCRRHIDAYKAPTPVEIVEGDIRDISIENASMVVLNFTLQFLEPLERQALLDKIYQGLNPGGALVLSEKFSFKDTTVGELLFNMHHDFKRANGYSELEISQKRSMLENVMLTDSVETHKARLHQAGFEHSELWFQCFNFGSLVALKSGVPA</sequence>
<proteinExistence type="inferred from homology"/>
<comment type="function">
    <text evidence="1">Catalyzes the conversion of S-adenosyl-L-methionine (SAM) to carboxy-S-adenosyl-L-methionine (Cx-SAM).</text>
</comment>
<comment type="catalytic activity">
    <reaction evidence="1">
        <text>prephenate + S-adenosyl-L-methionine = carboxy-S-adenosyl-L-methionine + 3-phenylpyruvate + H2O</text>
        <dbReference type="Rhea" id="RHEA:51692"/>
        <dbReference type="ChEBI" id="CHEBI:15377"/>
        <dbReference type="ChEBI" id="CHEBI:18005"/>
        <dbReference type="ChEBI" id="CHEBI:29934"/>
        <dbReference type="ChEBI" id="CHEBI:59789"/>
        <dbReference type="ChEBI" id="CHEBI:134278"/>
    </reaction>
</comment>
<comment type="subunit">
    <text evidence="1">Homodimer.</text>
</comment>
<comment type="similarity">
    <text evidence="1">Belongs to the class I-like SAM-binding methyltransferase superfamily. Cx-SAM synthase family.</text>
</comment>
<protein>
    <recommendedName>
        <fullName evidence="1">Carboxy-S-adenosyl-L-methionine synthase</fullName>
        <shortName evidence="1">Cx-SAM synthase</shortName>
        <ecNumber evidence="1">2.1.3.-</ecNumber>
    </recommendedName>
</protein>